<evidence type="ECO:0000250" key="1"/>
<evidence type="ECO:0000255" key="2"/>
<evidence type="ECO:0000305" key="3"/>
<name>NDUV1_ASPNG</name>
<keyword id="KW-0004">4Fe-4S</keyword>
<keyword id="KW-0249">Electron transport</keyword>
<keyword id="KW-0285">Flavoprotein</keyword>
<keyword id="KW-0288">FMN</keyword>
<keyword id="KW-0408">Iron</keyword>
<keyword id="KW-0411">Iron-sulfur</keyword>
<keyword id="KW-0472">Membrane</keyword>
<keyword id="KW-0479">Metal-binding</keyword>
<keyword id="KW-0496">Mitochondrion</keyword>
<keyword id="KW-0999">Mitochondrion inner membrane</keyword>
<keyword id="KW-0520">NAD</keyword>
<keyword id="KW-0560">Oxidoreductase</keyword>
<keyword id="KW-0679">Respiratory chain</keyword>
<keyword id="KW-0809">Transit peptide</keyword>
<keyword id="KW-1278">Translocase</keyword>
<keyword id="KW-0813">Transport</keyword>
<keyword id="KW-0830">Ubiquinone</keyword>
<gene>
    <name type="primary">NUO51</name>
</gene>
<comment type="function">
    <text evidence="1">Core subunit of the mitochondrial membrane respiratory chain NADH dehydrogenase (Complex I) that is believed to belong to the minimal assembly required for catalysis. Complex I functions in the transfer of electrons from NADH to the respiratory chain. The immediate electron acceptor for the enzyme is believed to be ubiquinone (By similarity).</text>
</comment>
<comment type="catalytic activity">
    <reaction>
        <text>a ubiquinone + NADH + 5 H(+)(in) = a ubiquinol + NAD(+) + 4 H(+)(out)</text>
        <dbReference type="Rhea" id="RHEA:29091"/>
        <dbReference type="Rhea" id="RHEA-COMP:9565"/>
        <dbReference type="Rhea" id="RHEA-COMP:9566"/>
        <dbReference type="ChEBI" id="CHEBI:15378"/>
        <dbReference type="ChEBI" id="CHEBI:16389"/>
        <dbReference type="ChEBI" id="CHEBI:17976"/>
        <dbReference type="ChEBI" id="CHEBI:57540"/>
        <dbReference type="ChEBI" id="CHEBI:57945"/>
        <dbReference type="EC" id="7.1.1.2"/>
    </reaction>
</comment>
<comment type="cofactor">
    <cofactor evidence="3">
        <name>FMN</name>
        <dbReference type="ChEBI" id="CHEBI:58210"/>
    </cofactor>
    <text evidence="3">Binds 1 FMN.</text>
</comment>
<comment type="cofactor">
    <cofactor evidence="3">
        <name>[4Fe-4S] cluster</name>
        <dbReference type="ChEBI" id="CHEBI:49883"/>
    </cofactor>
    <text evidence="3">Binds 1 [4Fe-4S] cluster.</text>
</comment>
<comment type="subunit">
    <text evidence="1">Complex I is composed of about 40 different subunits. This is a component of the flavoprotein-sulfur (FP) fragment of the enzyme (By similarity).</text>
</comment>
<comment type="subcellular location">
    <subcellularLocation>
        <location>Mitochondrion inner membrane</location>
        <topology>Peripheral membrane protein</topology>
        <orientation>Matrix side</orientation>
    </subcellularLocation>
</comment>
<comment type="similarity">
    <text evidence="3">Belongs to the complex I 51 kDa subunit family.</text>
</comment>
<feature type="transit peptide" description="Mitochondrion" evidence="1">
    <location>
        <begin position="1"/>
        <end position="30"/>
    </location>
</feature>
<feature type="chain" id="PRO_0000019979" description="NADH-ubiquinone oxidoreductase 51 kDa subunit, mitochondrial">
    <location>
        <begin position="31"/>
        <end position="496"/>
    </location>
</feature>
<feature type="binding site" evidence="1">
    <location>
        <begin position="98"/>
        <end position="107"/>
    </location>
    <ligand>
        <name>NAD(+)</name>
        <dbReference type="ChEBI" id="CHEBI:57540"/>
    </ligand>
</feature>
<feature type="binding site" evidence="1">
    <location>
        <begin position="214"/>
        <end position="261"/>
    </location>
    <ligand>
        <name>FMN</name>
        <dbReference type="ChEBI" id="CHEBI:58210"/>
    </ligand>
</feature>
<feature type="binding site" evidence="2">
    <location>
        <position position="393"/>
    </location>
    <ligand>
        <name>[4Fe-4S] cluster</name>
        <dbReference type="ChEBI" id="CHEBI:49883"/>
    </ligand>
</feature>
<feature type="binding site" evidence="2">
    <location>
        <position position="396"/>
    </location>
    <ligand>
        <name>[4Fe-4S] cluster</name>
        <dbReference type="ChEBI" id="CHEBI:49883"/>
    </ligand>
</feature>
<feature type="binding site" evidence="2">
    <location>
        <position position="399"/>
    </location>
    <ligand>
        <name>[4Fe-4S] cluster</name>
        <dbReference type="ChEBI" id="CHEBI:49883"/>
    </ligand>
</feature>
<feature type="binding site" evidence="2">
    <location>
        <position position="439"/>
    </location>
    <ligand>
        <name>[4Fe-4S] cluster</name>
        <dbReference type="ChEBI" id="CHEBI:49883"/>
    </ligand>
</feature>
<protein>
    <recommendedName>
        <fullName>NADH-ubiquinone oxidoreductase 51 kDa subunit, mitochondrial</fullName>
        <ecNumber>7.1.1.2</ecNumber>
    </recommendedName>
    <alternativeName>
        <fullName>Complex I-51kD</fullName>
        <shortName>CI-51kD</shortName>
    </alternativeName>
</protein>
<proteinExistence type="inferred from homology"/>
<reference key="1">
    <citation type="journal article" date="1993" name="Eur. J. Biochem.">
        <title>The role of the proton-pumping and alternative respiratory chain NADH:ubiquinone oxidoreductases in overflow catabolism of Aspergillus niger.</title>
        <authorList>
            <person name="Proemper C."/>
            <person name="Schneider R."/>
            <person name="Weiss H."/>
        </authorList>
    </citation>
    <scope>NUCLEOTIDE SEQUENCE [GENOMIC DNA]</scope>
    <source>
        <strain>ATCC 9029 / NRRL 3 / CBS 120.49 / DSM 2466 / N400 / FGSC 732</strain>
    </source>
</reference>
<accession>Q92406</accession>
<dbReference type="EC" id="7.1.1.2"/>
<dbReference type="EMBL" id="X64402">
    <property type="protein sequence ID" value="CAA45744.1"/>
    <property type="molecule type" value="Genomic_DNA"/>
</dbReference>
<dbReference type="SMR" id="Q92406"/>
<dbReference type="PaxDb" id="5061-CADANGAP00004183"/>
<dbReference type="VEuPathDB" id="FungiDB:An04g05640"/>
<dbReference type="VEuPathDB" id="FungiDB:ASPNIDRAFT2_1126508"/>
<dbReference type="VEuPathDB" id="FungiDB:ATCC64974_80820"/>
<dbReference type="VEuPathDB" id="FungiDB:M747DRAFT_259879"/>
<dbReference type="eggNOG" id="KOG2658">
    <property type="taxonomic scope" value="Eukaryota"/>
</dbReference>
<dbReference type="GO" id="GO:0005743">
    <property type="term" value="C:mitochondrial inner membrane"/>
    <property type="evidence" value="ECO:0007669"/>
    <property type="project" value="UniProtKB-SubCell"/>
</dbReference>
<dbReference type="GO" id="GO:0051539">
    <property type="term" value="F:4 iron, 4 sulfur cluster binding"/>
    <property type="evidence" value="ECO:0007669"/>
    <property type="project" value="UniProtKB-KW"/>
</dbReference>
<dbReference type="GO" id="GO:0010181">
    <property type="term" value="F:FMN binding"/>
    <property type="evidence" value="ECO:0007669"/>
    <property type="project" value="InterPro"/>
</dbReference>
<dbReference type="GO" id="GO:0046872">
    <property type="term" value="F:metal ion binding"/>
    <property type="evidence" value="ECO:0007669"/>
    <property type="project" value="UniProtKB-KW"/>
</dbReference>
<dbReference type="GO" id="GO:0051287">
    <property type="term" value="F:NAD binding"/>
    <property type="evidence" value="ECO:0007669"/>
    <property type="project" value="InterPro"/>
</dbReference>
<dbReference type="GO" id="GO:0008137">
    <property type="term" value="F:NADH dehydrogenase (ubiquinone) activity"/>
    <property type="evidence" value="ECO:0007669"/>
    <property type="project" value="UniProtKB-EC"/>
</dbReference>
<dbReference type="FunFam" id="1.20.1440.230:FF:000001">
    <property type="entry name" value="Mitochondrial NADH dehydrogenase flavoprotein 1"/>
    <property type="match status" value="1"/>
</dbReference>
<dbReference type="FunFam" id="3.10.20.600:FF:000001">
    <property type="entry name" value="NADH dehydrogenase [ubiquinone] flavoprotein 1, mitochondrial"/>
    <property type="match status" value="1"/>
</dbReference>
<dbReference type="FunFam" id="3.40.50.11540:FF:000001">
    <property type="entry name" value="NADH dehydrogenase [ubiquinone] flavoprotein 1, mitochondrial"/>
    <property type="match status" value="1"/>
</dbReference>
<dbReference type="Gene3D" id="3.10.20.600">
    <property type="match status" value="1"/>
</dbReference>
<dbReference type="Gene3D" id="3.40.50.11540">
    <property type="entry name" value="NADH-ubiquinone oxidoreductase 51kDa subunit"/>
    <property type="match status" value="1"/>
</dbReference>
<dbReference type="Gene3D" id="1.20.1440.230">
    <property type="entry name" value="NADH-ubiquinone oxidoreductase 51kDa subunit, iron-sulphur binding domain"/>
    <property type="match status" value="1"/>
</dbReference>
<dbReference type="InterPro" id="IPR050837">
    <property type="entry name" value="ComplexI_51kDa_subunit"/>
</dbReference>
<dbReference type="InterPro" id="IPR001949">
    <property type="entry name" value="NADH-UbQ_OxRdtase_51kDa_CS"/>
</dbReference>
<dbReference type="InterPro" id="IPR011537">
    <property type="entry name" value="NADH-UbQ_OxRdtase_suF"/>
</dbReference>
<dbReference type="InterPro" id="IPR011538">
    <property type="entry name" value="Nuo51_FMN-bd"/>
</dbReference>
<dbReference type="InterPro" id="IPR037225">
    <property type="entry name" value="Nuo51_FMN-bd_sf"/>
</dbReference>
<dbReference type="InterPro" id="IPR019575">
    <property type="entry name" value="Nuop51_4Fe4S-bd"/>
</dbReference>
<dbReference type="InterPro" id="IPR037207">
    <property type="entry name" value="Nuop51_4Fe4S-bd_sf"/>
</dbReference>
<dbReference type="InterPro" id="IPR054765">
    <property type="entry name" value="SLBB_dom"/>
</dbReference>
<dbReference type="NCBIfam" id="TIGR01959">
    <property type="entry name" value="nuoF_fam"/>
    <property type="match status" value="1"/>
</dbReference>
<dbReference type="NCBIfam" id="NF010120">
    <property type="entry name" value="PRK13596.1"/>
    <property type="match status" value="1"/>
</dbReference>
<dbReference type="PANTHER" id="PTHR11780:SF10">
    <property type="entry name" value="NADH DEHYDROGENASE [UBIQUINONE] FLAVOPROTEIN 1, MITOCHONDRIAL"/>
    <property type="match status" value="1"/>
</dbReference>
<dbReference type="PANTHER" id="PTHR11780">
    <property type="entry name" value="NADH-UBIQUINONE OXIDOREDUCTASE FLAVOPROTEIN 1 NDUFV1"/>
    <property type="match status" value="1"/>
</dbReference>
<dbReference type="Pfam" id="PF01512">
    <property type="entry name" value="Complex1_51K"/>
    <property type="match status" value="1"/>
</dbReference>
<dbReference type="Pfam" id="PF10589">
    <property type="entry name" value="NADH_4Fe-4S"/>
    <property type="match status" value="1"/>
</dbReference>
<dbReference type="Pfam" id="PF22461">
    <property type="entry name" value="SLBB_2"/>
    <property type="match status" value="1"/>
</dbReference>
<dbReference type="SMART" id="SM00928">
    <property type="entry name" value="NADH_4Fe-4S"/>
    <property type="match status" value="1"/>
</dbReference>
<dbReference type="SUPFAM" id="SSF142019">
    <property type="entry name" value="Nqo1 FMN-binding domain-like"/>
    <property type="match status" value="1"/>
</dbReference>
<dbReference type="SUPFAM" id="SSF142984">
    <property type="entry name" value="Nqo1 middle domain-like"/>
    <property type="match status" value="1"/>
</dbReference>
<dbReference type="SUPFAM" id="SSF140490">
    <property type="entry name" value="Nqo1C-terminal domain-like"/>
    <property type="match status" value="1"/>
</dbReference>
<dbReference type="PROSITE" id="PS00644">
    <property type="entry name" value="COMPLEX1_51K_1"/>
    <property type="match status" value="1"/>
</dbReference>
<dbReference type="PROSITE" id="PS00645">
    <property type="entry name" value="COMPLEX1_51K_2"/>
    <property type="match status" value="1"/>
</dbReference>
<organism>
    <name type="scientific">Aspergillus niger</name>
    <dbReference type="NCBI Taxonomy" id="5061"/>
    <lineage>
        <taxon>Eukaryota</taxon>
        <taxon>Fungi</taxon>
        <taxon>Dikarya</taxon>
        <taxon>Ascomycota</taxon>
        <taxon>Pezizomycotina</taxon>
        <taxon>Eurotiomycetes</taxon>
        <taxon>Eurotiomycetidae</taxon>
        <taxon>Eurotiales</taxon>
        <taxon>Aspergillaceae</taxon>
        <taxon>Aspergillus</taxon>
        <taxon>Aspergillus subgen. Circumdati</taxon>
    </lineage>
</organism>
<sequence>MISRAAAPSSSIASLSSRSLRAQAPAARSFATVQDNAPPVKHYGGLKDQDRIFTNLYGHHGADLKSAMKYGDWHRTKDIVLKGHDWLISELKASGLRGRGGAGFPSGLKYSFMNFKDWDKDPRPRYLVVNADEGEPGTCKDREIMRKDPQKLIEGCLVVGRAMNANAAYMYIRGEFYQEATVLQRAINEAYEAGLIGKNACGTGYDFDVYIHRGMGAYVCGEETSLIESIEGKAGKPRLKPPFPAAVGLFGCPSTVTNVETVAVTPTIMRRGASWFSSFGRERNAGTKLFCISGHVNNPCTVEEEMSISLRDVIDRHCGGVRGGWDNLLAVIPGGSSTPVLPKTICDDQLMDFDALKDSQSGLGTAAVIVMDKSTDIVRAISRLSTFYKHESCGQCTPCREGSKWTMHMMQRMEKGQAREREIDMLQELTKQVEGHTICALGEAFAWPIQGLIRHFRPELEARIREYSKEVGGNGPYAGGWHPEARAEGKLISPGM</sequence>